<reference key="1">
    <citation type="journal article" date="2001" name="DNA Res.">
        <title>Complete genomic sequence of the filamentous nitrogen-fixing cyanobacterium Anabaena sp. strain PCC 7120.</title>
        <authorList>
            <person name="Kaneko T."/>
            <person name="Nakamura Y."/>
            <person name="Wolk C.P."/>
            <person name="Kuritz T."/>
            <person name="Sasamoto S."/>
            <person name="Watanabe A."/>
            <person name="Iriguchi M."/>
            <person name="Ishikawa A."/>
            <person name="Kawashima K."/>
            <person name="Kimura T."/>
            <person name="Kishida Y."/>
            <person name="Kohara M."/>
            <person name="Matsumoto M."/>
            <person name="Matsuno A."/>
            <person name="Muraki A."/>
            <person name="Nakazaki N."/>
            <person name="Shimpo S."/>
            <person name="Sugimoto M."/>
            <person name="Takazawa M."/>
            <person name="Yamada M."/>
            <person name="Yasuda M."/>
            <person name="Tabata S."/>
        </authorList>
    </citation>
    <scope>NUCLEOTIDE SEQUENCE [LARGE SCALE GENOMIC DNA]</scope>
    <source>
        <strain>PCC 7120 / SAG 25.82 / UTEX 2576</strain>
    </source>
</reference>
<proteinExistence type="inferred from homology"/>
<protein>
    <recommendedName>
        <fullName evidence="1">NAD(P)H-quinone oxidoreductase subunit N</fullName>
        <ecNumber evidence="1">7.1.1.-</ecNumber>
    </recommendedName>
    <alternativeName>
        <fullName evidence="1">NAD(P)H dehydrogenase I subunit N</fullName>
        <shortName evidence="1">NDH-1 subunit N</shortName>
        <shortName evidence="1">NDH-N</shortName>
    </alternativeName>
</protein>
<gene>
    <name evidence="1" type="primary">ndhN</name>
    <name type="ordered locus">alr4216</name>
</gene>
<accession>Q8YPH8</accession>
<feature type="chain" id="PRO_0000352213" description="NAD(P)H-quinone oxidoreductase subunit N">
    <location>
        <begin position="1"/>
        <end position="162"/>
    </location>
</feature>
<sequence length="162" mass="17637">MALITTGNGLIRDLEKFGSVGVYVPLEGGFEGRYRRRLRAAGYTTLQFTARGLGDVAAYLTGVHGVRPPHLGKKSSGNGAAVGNVYYLPPIVGSQLEHLPPKSKGLVLWIIEGHILSDQEVEFLTSLPSLEPRVKVVVERGGDRTFRWKALKDTFSASYQAV</sequence>
<organism>
    <name type="scientific">Nostoc sp. (strain PCC 7120 / SAG 25.82 / UTEX 2576)</name>
    <dbReference type="NCBI Taxonomy" id="103690"/>
    <lineage>
        <taxon>Bacteria</taxon>
        <taxon>Bacillati</taxon>
        <taxon>Cyanobacteriota</taxon>
        <taxon>Cyanophyceae</taxon>
        <taxon>Nostocales</taxon>
        <taxon>Nostocaceae</taxon>
        <taxon>Nostoc</taxon>
    </lineage>
</organism>
<dbReference type="EC" id="7.1.1.-" evidence="1"/>
<dbReference type="EMBL" id="BA000019">
    <property type="protein sequence ID" value="BAB75915.1"/>
    <property type="molecule type" value="Genomic_DNA"/>
</dbReference>
<dbReference type="PIR" id="AI2332">
    <property type="entry name" value="AI2332"/>
</dbReference>
<dbReference type="RefSeq" id="WP_010998354.1">
    <property type="nucleotide sequence ID" value="NZ_RSCN01000010.1"/>
</dbReference>
<dbReference type="SMR" id="Q8YPH8"/>
<dbReference type="STRING" id="103690.gene:10496265"/>
<dbReference type="KEGG" id="ana:alr4216"/>
<dbReference type="eggNOG" id="ENOG502ZBMI">
    <property type="taxonomic scope" value="Bacteria"/>
</dbReference>
<dbReference type="OrthoDB" id="510798at2"/>
<dbReference type="Proteomes" id="UP000002483">
    <property type="component" value="Chromosome"/>
</dbReference>
<dbReference type="GO" id="GO:0031676">
    <property type="term" value="C:plasma membrane-derived thylakoid membrane"/>
    <property type="evidence" value="ECO:0007669"/>
    <property type="project" value="UniProtKB-SubCell"/>
</dbReference>
<dbReference type="GO" id="GO:0016655">
    <property type="term" value="F:oxidoreductase activity, acting on NAD(P)H, quinone or similar compound as acceptor"/>
    <property type="evidence" value="ECO:0007669"/>
    <property type="project" value="UniProtKB-UniRule"/>
</dbReference>
<dbReference type="GO" id="GO:0048038">
    <property type="term" value="F:quinone binding"/>
    <property type="evidence" value="ECO:0007669"/>
    <property type="project" value="UniProtKB-KW"/>
</dbReference>
<dbReference type="HAMAP" id="MF_01353">
    <property type="entry name" value="NDH1_NDH1N"/>
    <property type="match status" value="1"/>
</dbReference>
<dbReference type="InterPro" id="IPR020874">
    <property type="entry name" value="NAD(P)H-quinone_OxRdtase_su_N"/>
</dbReference>
<dbReference type="PANTHER" id="PTHR35515">
    <property type="entry name" value="NAD(P)H-QUINONE OXIDOREDUCTASE SUBUNIT N, CHLOROPLASTIC"/>
    <property type="match status" value="1"/>
</dbReference>
<dbReference type="PANTHER" id="PTHR35515:SF1">
    <property type="entry name" value="NAD(P)H-QUINONE OXIDOREDUCTASE SUBUNIT N, CHLOROPLASTIC"/>
    <property type="match status" value="1"/>
</dbReference>
<dbReference type="Pfam" id="PF11909">
    <property type="entry name" value="NdhN"/>
    <property type="match status" value="1"/>
</dbReference>
<keyword id="KW-0472">Membrane</keyword>
<keyword id="KW-0520">NAD</keyword>
<keyword id="KW-0521">NADP</keyword>
<keyword id="KW-0618">Plastoquinone</keyword>
<keyword id="KW-0874">Quinone</keyword>
<keyword id="KW-1185">Reference proteome</keyword>
<keyword id="KW-0793">Thylakoid</keyword>
<keyword id="KW-1278">Translocase</keyword>
<keyword id="KW-0813">Transport</keyword>
<evidence type="ECO:0000255" key="1">
    <source>
        <dbReference type="HAMAP-Rule" id="MF_01353"/>
    </source>
</evidence>
<comment type="function">
    <text evidence="1">NDH-1 shuttles electrons from an unknown electron donor, via FMN and iron-sulfur (Fe-S) centers, to quinones in the respiratory and/or the photosynthetic chain. The immediate electron acceptor for the enzyme in this species is believed to be plastoquinone. Couples the redox reaction to proton translocation, and thus conserves the redox energy in a proton gradient. Cyanobacterial NDH-1 also plays a role in inorganic carbon-concentration.</text>
</comment>
<comment type="catalytic activity">
    <reaction evidence="1">
        <text>a plastoquinone + NADH + (n+1) H(+)(in) = a plastoquinol + NAD(+) + n H(+)(out)</text>
        <dbReference type="Rhea" id="RHEA:42608"/>
        <dbReference type="Rhea" id="RHEA-COMP:9561"/>
        <dbReference type="Rhea" id="RHEA-COMP:9562"/>
        <dbReference type="ChEBI" id="CHEBI:15378"/>
        <dbReference type="ChEBI" id="CHEBI:17757"/>
        <dbReference type="ChEBI" id="CHEBI:57540"/>
        <dbReference type="ChEBI" id="CHEBI:57945"/>
        <dbReference type="ChEBI" id="CHEBI:62192"/>
    </reaction>
</comment>
<comment type="catalytic activity">
    <reaction evidence="1">
        <text>a plastoquinone + NADPH + (n+1) H(+)(in) = a plastoquinol + NADP(+) + n H(+)(out)</text>
        <dbReference type="Rhea" id="RHEA:42612"/>
        <dbReference type="Rhea" id="RHEA-COMP:9561"/>
        <dbReference type="Rhea" id="RHEA-COMP:9562"/>
        <dbReference type="ChEBI" id="CHEBI:15378"/>
        <dbReference type="ChEBI" id="CHEBI:17757"/>
        <dbReference type="ChEBI" id="CHEBI:57783"/>
        <dbReference type="ChEBI" id="CHEBI:58349"/>
        <dbReference type="ChEBI" id="CHEBI:62192"/>
    </reaction>
</comment>
<comment type="subunit">
    <text evidence="1">NDH-1 can be composed of about 15 different subunits; different subcomplexes with different compositions have been identified which probably have different functions.</text>
</comment>
<comment type="subcellular location">
    <subcellularLocation>
        <location evidence="1">Cellular thylakoid membrane</location>
        <topology evidence="1">Peripheral membrane protein</topology>
        <orientation evidence="1">Cytoplasmic side</orientation>
    </subcellularLocation>
</comment>
<comment type="similarity">
    <text evidence="1">Belongs to the complex I NdhN subunit family.</text>
</comment>
<name>NDHN_NOSS1</name>